<sequence>MQHNQLLEQLYSGHSLSTSESTALFNAVIQGELSNEQIAAMLIALKVRGANTEEITGAVAASLQNAKVFPRPDYPFADIVGTGGDGQNTINISTASAIVAASMGAKVAKHGNRSVSSKSGASDVLTALGVNVNVTLEQARQALDEIGVCFLFAQQYHSGFRHVAPVRAALKTHTIFNILGPLINPARPTYHLLGVYAPELVKTYAETAVALEHQHSFVVHGSGLDEVALHGETQVAEIKNGKIEYFTLTPEDFGLKTQSLESLRGGEPQENTQYLTALLQGKGKAEHANAVAANTALLLKLFGYDDLKQNVQNVLAHLVSGKAFETLQKLTTY</sequence>
<protein>
    <recommendedName>
        <fullName evidence="1">Anthranilate phosphoribosyltransferase</fullName>
        <ecNumber evidence="1">2.4.2.18</ecNumber>
    </recommendedName>
</protein>
<organism>
    <name type="scientific">Haemophilus influenzae (strain PittEE)</name>
    <dbReference type="NCBI Taxonomy" id="374930"/>
    <lineage>
        <taxon>Bacteria</taxon>
        <taxon>Pseudomonadati</taxon>
        <taxon>Pseudomonadota</taxon>
        <taxon>Gammaproteobacteria</taxon>
        <taxon>Pasteurellales</taxon>
        <taxon>Pasteurellaceae</taxon>
        <taxon>Haemophilus</taxon>
    </lineage>
</organism>
<keyword id="KW-0028">Amino-acid biosynthesis</keyword>
<keyword id="KW-0057">Aromatic amino acid biosynthesis</keyword>
<keyword id="KW-0328">Glycosyltransferase</keyword>
<keyword id="KW-0460">Magnesium</keyword>
<keyword id="KW-0479">Metal-binding</keyword>
<keyword id="KW-0808">Transferase</keyword>
<keyword id="KW-0822">Tryptophan biosynthesis</keyword>
<name>TRPD_HAEIE</name>
<comment type="function">
    <text evidence="1">Catalyzes the transfer of the phosphoribosyl group of 5-phosphorylribose-1-pyrophosphate (PRPP) to anthranilate to yield N-(5'-phosphoribosyl)-anthranilate (PRA).</text>
</comment>
<comment type="catalytic activity">
    <reaction evidence="1">
        <text>N-(5-phospho-beta-D-ribosyl)anthranilate + diphosphate = 5-phospho-alpha-D-ribose 1-diphosphate + anthranilate</text>
        <dbReference type="Rhea" id="RHEA:11768"/>
        <dbReference type="ChEBI" id="CHEBI:16567"/>
        <dbReference type="ChEBI" id="CHEBI:18277"/>
        <dbReference type="ChEBI" id="CHEBI:33019"/>
        <dbReference type="ChEBI" id="CHEBI:58017"/>
        <dbReference type="EC" id="2.4.2.18"/>
    </reaction>
</comment>
<comment type="cofactor">
    <cofactor evidence="1">
        <name>Mg(2+)</name>
        <dbReference type="ChEBI" id="CHEBI:18420"/>
    </cofactor>
    <text evidence="1">Binds 2 magnesium ions per monomer.</text>
</comment>
<comment type="pathway">
    <text evidence="1">Amino-acid biosynthesis; L-tryptophan biosynthesis; L-tryptophan from chorismate: step 2/5.</text>
</comment>
<comment type="subunit">
    <text evidence="1">Homodimer.</text>
</comment>
<comment type="similarity">
    <text evidence="1">Belongs to the anthranilate phosphoribosyltransferase family.</text>
</comment>
<dbReference type="EC" id="2.4.2.18" evidence="1"/>
<dbReference type="EMBL" id="CP000671">
    <property type="protein sequence ID" value="ABQ98297.1"/>
    <property type="molecule type" value="Genomic_DNA"/>
</dbReference>
<dbReference type="SMR" id="A5UBZ6"/>
<dbReference type="KEGG" id="hip:CGSHiEE_04510"/>
<dbReference type="HOGENOM" id="CLU_034315_2_1_6"/>
<dbReference type="UniPathway" id="UPA00035">
    <property type="reaction ID" value="UER00041"/>
</dbReference>
<dbReference type="GO" id="GO:0005829">
    <property type="term" value="C:cytosol"/>
    <property type="evidence" value="ECO:0007669"/>
    <property type="project" value="TreeGrafter"/>
</dbReference>
<dbReference type="GO" id="GO:0004048">
    <property type="term" value="F:anthranilate phosphoribosyltransferase activity"/>
    <property type="evidence" value="ECO:0007669"/>
    <property type="project" value="UniProtKB-UniRule"/>
</dbReference>
<dbReference type="GO" id="GO:0000287">
    <property type="term" value="F:magnesium ion binding"/>
    <property type="evidence" value="ECO:0007669"/>
    <property type="project" value="UniProtKB-UniRule"/>
</dbReference>
<dbReference type="GO" id="GO:0000162">
    <property type="term" value="P:L-tryptophan biosynthetic process"/>
    <property type="evidence" value="ECO:0007669"/>
    <property type="project" value="UniProtKB-UniRule"/>
</dbReference>
<dbReference type="FunFam" id="1.20.970.10:FF:000003">
    <property type="entry name" value="Anthranilate phosphoribosyltransferase"/>
    <property type="match status" value="1"/>
</dbReference>
<dbReference type="FunFam" id="3.40.1030.10:FF:000002">
    <property type="entry name" value="Anthranilate phosphoribosyltransferase"/>
    <property type="match status" value="1"/>
</dbReference>
<dbReference type="Gene3D" id="3.40.1030.10">
    <property type="entry name" value="Nucleoside phosphorylase/phosphoribosyltransferase catalytic domain"/>
    <property type="match status" value="1"/>
</dbReference>
<dbReference type="Gene3D" id="1.20.970.10">
    <property type="entry name" value="Transferase, Pyrimidine Nucleoside Phosphorylase, Chain C"/>
    <property type="match status" value="1"/>
</dbReference>
<dbReference type="HAMAP" id="MF_00211">
    <property type="entry name" value="TrpD"/>
    <property type="match status" value="1"/>
</dbReference>
<dbReference type="InterPro" id="IPR005940">
    <property type="entry name" value="Anthranilate_Pribosyl_Tfrase"/>
</dbReference>
<dbReference type="InterPro" id="IPR000312">
    <property type="entry name" value="Glycosyl_Trfase_fam3"/>
</dbReference>
<dbReference type="InterPro" id="IPR017459">
    <property type="entry name" value="Glycosyl_Trfase_fam3_N_dom"/>
</dbReference>
<dbReference type="InterPro" id="IPR036320">
    <property type="entry name" value="Glycosyl_Trfase_fam3_N_dom_sf"/>
</dbReference>
<dbReference type="InterPro" id="IPR035902">
    <property type="entry name" value="Nuc_phospho_transferase"/>
</dbReference>
<dbReference type="NCBIfam" id="TIGR01245">
    <property type="entry name" value="trpD"/>
    <property type="match status" value="1"/>
</dbReference>
<dbReference type="PANTHER" id="PTHR43285">
    <property type="entry name" value="ANTHRANILATE PHOSPHORIBOSYLTRANSFERASE"/>
    <property type="match status" value="1"/>
</dbReference>
<dbReference type="PANTHER" id="PTHR43285:SF2">
    <property type="entry name" value="ANTHRANILATE PHOSPHORIBOSYLTRANSFERASE"/>
    <property type="match status" value="1"/>
</dbReference>
<dbReference type="Pfam" id="PF02885">
    <property type="entry name" value="Glycos_trans_3N"/>
    <property type="match status" value="1"/>
</dbReference>
<dbReference type="Pfam" id="PF00591">
    <property type="entry name" value="Glycos_transf_3"/>
    <property type="match status" value="1"/>
</dbReference>
<dbReference type="SUPFAM" id="SSF52418">
    <property type="entry name" value="Nucleoside phosphorylase/phosphoribosyltransferase catalytic domain"/>
    <property type="match status" value="1"/>
</dbReference>
<dbReference type="SUPFAM" id="SSF47648">
    <property type="entry name" value="Nucleoside phosphorylase/phosphoribosyltransferase N-terminal domain"/>
    <property type="match status" value="1"/>
</dbReference>
<feature type="chain" id="PRO_1000043010" description="Anthranilate phosphoribosyltransferase">
    <location>
        <begin position="1"/>
        <end position="333"/>
    </location>
</feature>
<feature type="binding site" evidence="1">
    <location>
        <position position="81"/>
    </location>
    <ligand>
        <name>5-phospho-alpha-D-ribose 1-diphosphate</name>
        <dbReference type="ChEBI" id="CHEBI:58017"/>
    </ligand>
</feature>
<feature type="binding site" evidence="1">
    <location>
        <position position="81"/>
    </location>
    <ligand>
        <name>anthranilate</name>
        <dbReference type="ChEBI" id="CHEBI:16567"/>
        <label>1</label>
    </ligand>
</feature>
<feature type="binding site" evidence="1">
    <location>
        <begin position="84"/>
        <end position="85"/>
    </location>
    <ligand>
        <name>5-phospho-alpha-D-ribose 1-diphosphate</name>
        <dbReference type="ChEBI" id="CHEBI:58017"/>
    </ligand>
</feature>
<feature type="binding site" evidence="1">
    <location>
        <position position="89"/>
    </location>
    <ligand>
        <name>5-phospho-alpha-D-ribose 1-diphosphate</name>
        <dbReference type="ChEBI" id="CHEBI:58017"/>
    </ligand>
</feature>
<feature type="binding site" evidence="1">
    <location>
        <begin position="91"/>
        <end position="94"/>
    </location>
    <ligand>
        <name>5-phospho-alpha-D-ribose 1-diphosphate</name>
        <dbReference type="ChEBI" id="CHEBI:58017"/>
    </ligand>
</feature>
<feature type="binding site" evidence="1">
    <location>
        <position position="93"/>
    </location>
    <ligand>
        <name>Mg(2+)</name>
        <dbReference type="ChEBI" id="CHEBI:18420"/>
        <label>1</label>
    </ligand>
</feature>
<feature type="binding site" evidence="1">
    <location>
        <begin position="109"/>
        <end position="117"/>
    </location>
    <ligand>
        <name>5-phospho-alpha-D-ribose 1-diphosphate</name>
        <dbReference type="ChEBI" id="CHEBI:58017"/>
    </ligand>
</feature>
<feature type="binding site" evidence="1">
    <location>
        <position position="112"/>
    </location>
    <ligand>
        <name>anthranilate</name>
        <dbReference type="ChEBI" id="CHEBI:16567"/>
        <label>1</label>
    </ligand>
</feature>
<feature type="binding site" evidence="1">
    <location>
        <position position="121"/>
    </location>
    <ligand>
        <name>5-phospho-alpha-D-ribose 1-diphosphate</name>
        <dbReference type="ChEBI" id="CHEBI:58017"/>
    </ligand>
</feature>
<feature type="binding site" evidence="1">
    <location>
        <position position="167"/>
    </location>
    <ligand>
        <name>anthranilate</name>
        <dbReference type="ChEBI" id="CHEBI:16567"/>
        <label>2</label>
    </ligand>
</feature>
<feature type="binding site" evidence="1">
    <location>
        <position position="225"/>
    </location>
    <ligand>
        <name>Mg(2+)</name>
        <dbReference type="ChEBI" id="CHEBI:18420"/>
        <label>2</label>
    </ligand>
</feature>
<feature type="binding site" evidence="1">
    <location>
        <position position="226"/>
    </location>
    <ligand>
        <name>Mg(2+)</name>
        <dbReference type="ChEBI" id="CHEBI:18420"/>
        <label>1</label>
    </ligand>
</feature>
<feature type="binding site" evidence="1">
    <location>
        <position position="226"/>
    </location>
    <ligand>
        <name>Mg(2+)</name>
        <dbReference type="ChEBI" id="CHEBI:18420"/>
        <label>2</label>
    </ligand>
</feature>
<accession>A5UBZ6</accession>
<reference key="1">
    <citation type="journal article" date="2007" name="Genome Biol.">
        <title>Characterization and modeling of the Haemophilus influenzae core and supragenomes based on the complete genomic sequences of Rd and 12 clinical nontypeable strains.</title>
        <authorList>
            <person name="Hogg J.S."/>
            <person name="Hu F.Z."/>
            <person name="Janto B."/>
            <person name="Boissy R."/>
            <person name="Hayes J."/>
            <person name="Keefe R."/>
            <person name="Post J.C."/>
            <person name="Ehrlich G.D."/>
        </authorList>
    </citation>
    <scope>NUCLEOTIDE SEQUENCE [LARGE SCALE GENOMIC DNA]</scope>
    <source>
        <strain>PittEE</strain>
    </source>
</reference>
<gene>
    <name evidence="1" type="primary">trpD</name>
    <name type="ordered locus">CGSHiEE_04510</name>
</gene>
<evidence type="ECO:0000255" key="1">
    <source>
        <dbReference type="HAMAP-Rule" id="MF_00211"/>
    </source>
</evidence>
<proteinExistence type="inferred from homology"/>